<keyword id="KW-0496">Mitochondrion</keyword>
<keyword id="KW-1185">Reference proteome</keyword>
<keyword id="KW-0677">Repeat</keyword>
<keyword id="KW-0809">Transit peptide</keyword>
<reference key="1">
    <citation type="journal article" date="1999" name="Nature">
        <title>Sequence and analysis of chromosome 4 of the plant Arabidopsis thaliana.</title>
        <authorList>
            <person name="Mayer K.F.X."/>
            <person name="Schueller C."/>
            <person name="Wambutt R."/>
            <person name="Murphy G."/>
            <person name="Volckaert G."/>
            <person name="Pohl T."/>
            <person name="Duesterhoeft A."/>
            <person name="Stiekema W."/>
            <person name="Entian K.-D."/>
            <person name="Terryn N."/>
            <person name="Harris B."/>
            <person name="Ansorge W."/>
            <person name="Brandt P."/>
            <person name="Grivell L.A."/>
            <person name="Rieger M."/>
            <person name="Weichselgartner M."/>
            <person name="de Simone V."/>
            <person name="Obermaier B."/>
            <person name="Mache R."/>
            <person name="Mueller M."/>
            <person name="Kreis M."/>
            <person name="Delseny M."/>
            <person name="Puigdomenech P."/>
            <person name="Watson M."/>
            <person name="Schmidtheini T."/>
            <person name="Reichert B."/>
            <person name="Portetelle D."/>
            <person name="Perez-Alonso M."/>
            <person name="Boutry M."/>
            <person name="Bancroft I."/>
            <person name="Vos P."/>
            <person name="Hoheisel J."/>
            <person name="Zimmermann W."/>
            <person name="Wedler H."/>
            <person name="Ridley P."/>
            <person name="Langham S.-A."/>
            <person name="McCullagh B."/>
            <person name="Bilham L."/>
            <person name="Robben J."/>
            <person name="van der Schueren J."/>
            <person name="Grymonprez B."/>
            <person name="Chuang Y.-J."/>
            <person name="Vandenbussche F."/>
            <person name="Braeken M."/>
            <person name="Weltjens I."/>
            <person name="Voet M."/>
            <person name="Bastiaens I."/>
            <person name="Aert R."/>
            <person name="Defoor E."/>
            <person name="Weitzenegger T."/>
            <person name="Bothe G."/>
            <person name="Ramsperger U."/>
            <person name="Hilbert H."/>
            <person name="Braun M."/>
            <person name="Holzer E."/>
            <person name="Brandt A."/>
            <person name="Peters S."/>
            <person name="van Staveren M."/>
            <person name="Dirkse W."/>
            <person name="Mooijman P."/>
            <person name="Klein Lankhorst R."/>
            <person name="Rose M."/>
            <person name="Hauf J."/>
            <person name="Koetter P."/>
            <person name="Berneiser S."/>
            <person name="Hempel S."/>
            <person name="Feldpausch M."/>
            <person name="Lamberth S."/>
            <person name="Van den Daele H."/>
            <person name="De Keyser A."/>
            <person name="Buysshaert C."/>
            <person name="Gielen J."/>
            <person name="Villarroel R."/>
            <person name="De Clercq R."/>
            <person name="van Montagu M."/>
            <person name="Rogers J."/>
            <person name="Cronin A."/>
            <person name="Quail M.A."/>
            <person name="Bray-Allen S."/>
            <person name="Clark L."/>
            <person name="Doggett J."/>
            <person name="Hall S."/>
            <person name="Kay M."/>
            <person name="Lennard N."/>
            <person name="McLay K."/>
            <person name="Mayes R."/>
            <person name="Pettett A."/>
            <person name="Rajandream M.A."/>
            <person name="Lyne M."/>
            <person name="Benes V."/>
            <person name="Rechmann S."/>
            <person name="Borkova D."/>
            <person name="Bloecker H."/>
            <person name="Scharfe M."/>
            <person name="Grimm M."/>
            <person name="Loehnert T.-H."/>
            <person name="Dose S."/>
            <person name="de Haan M."/>
            <person name="Maarse A.C."/>
            <person name="Schaefer M."/>
            <person name="Mueller-Auer S."/>
            <person name="Gabel C."/>
            <person name="Fuchs M."/>
            <person name="Fartmann B."/>
            <person name="Granderath K."/>
            <person name="Dauner D."/>
            <person name="Herzl A."/>
            <person name="Neumann S."/>
            <person name="Argiriou A."/>
            <person name="Vitale D."/>
            <person name="Liguori R."/>
            <person name="Piravandi E."/>
            <person name="Massenet O."/>
            <person name="Quigley F."/>
            <person name="Clabauld G."/>
            <person name="Muendlein A."/>
            <person name="Felber R."/>
            <person name="Schnabl S."/>
            <person name="Hiller R."/>
            <person name="Schmidt W."/>
            <person name="Lecharny A."/>
            <person name="Aubourg S."/>
            <person name="Chefdor F."/>
            <person name="Cooke R."/>
            <person name="Berger C."/>
            <person name="Monfort A."/>
            <person name="Casacuberta E."/>
            <person name="Gibbons T."/>
            <person name="Weber N."/>
            <person name="Vandenbol M."/>
            <person name="Bargues M."/>
            <person name="Terol J."/>
            <person name="Torres A."/>
            <person name="Perez-Perez A."/>
            <person name="Purnelle B."/>
            <person name="Bent E."/>
            <person name="Johnson S."/>
            <person name="Tacon D."/>
            <person name="Jesse T."/>
            <person name="Heijnen L."/>
            <person name="Schwarz S."/>
            <person name="Scholler P."/>
            <person name="Heber S."/>
            <person name="Francs P."/>
            <person name="Bielke C."/>
            <person name="Frishman D."/>
            <person name="Haase D."/>
            <person name="Lemcke K."/>
            <person name="Mewes H.-W."/>
            <person name="Stocker S."/>
            <person name="Zaccaria P."/>
            <person name="Bevan M."/>
            <person name="Wilson R.K."/>
            <person name="de la Bastide M."/>
            <person name="Habermann K."/>
            <person name="Parnell L."/>
            <person name="Dedhia N."/>
            <person name="Gnoj L."/>
            <person name="Schutz K."/>
            <person name="Huang E."/>
            <person name="Spiegel L."/>
            <person name="Sekhon M."/>
            <person name="Murray J."/>
            <person name="Sheet P."/>
            <person name="Cordes M."/>
            <person name="Abu-Threideh J."/>
            <person name="Stoneking T."/>
            <person name="Kalicki J."/>
            <person name="Graves T."/>
            <person name="Harmon G."/>
            <person name="Edwards J."/>
            <person name="Latreille P."/>
            <person name="Courtney L."/>
            <person name="Cloud J."/>
            <person name="Abbott A."/>
            <person name="Scott K."/>
            <person name="Johnson D."/>
            <person name="Minx P."/>
            <person name="Bentley D."/>
            <person name="Fulton B."/>
            <person name="Miller N."/>
            <person name="Greco T."/>
            <person name="Kemp K."/>
            <person name="Kramer J."/>
            <person name="Fulton L."/>
            <person name="Mardis E."/>
            <person name="Dante M."/>
            <person name="Pepin K."/>
            <person name="Hillier L.W."/>
            <person name="Nelson J."/>
            <person name="Spieth J."/>
            <person name="Ryan E."/>
            <person name="Andrews S."/>
            <person name="Geisel C."/>
            <person name="Layman D."/>
            <person name="Du H."/>
            <person name="Ali J."/>
            <person name="Berghoff A."/>
            <person name="Jones K."/>
            <person name="Drone K."/>
            <person name="Cotton M."/>
            <person name="Joshu C."/>
            <person name="Antonoiu B."/>
            <person name="Zidanic M."/>
            <person name="Strong C."/>
            <person name="Sun H."/>
            <person name="Lamar B."/>
            <person name="Yordan C."/>
            <person name="Ma P."/>
            <person name="Zhong J."/>
            <person name="Preston R."/>
            <person name="Vil D."/>
            <person name="Shekher M."/>
            <person name="Matero A."/>
            <person name="Shah R."/>
            <person name="Swaby I.K."/>
            <person name="O'Shaughnessy A."/>
            <person name="Rodriguez M."/>
            <person name="Hoffman J."/>
            <person name="Till S."/>
            <person name="Granat S."/>
            <person name="Shohdy N."/>
            <person name="Hasegawa A."/>
            <person name="Hameed A."/>
            <person name="Lodhi M."/>
            <person name="Johnson A."/>
            <person name="Chen E."/>
            <person name="Marra M.A."/>
            <person name="Martienssen R."/>
            <person name="McCombie W.R."/>
        </authorList>
    </citation>
    <scope>NUCLEOTIDE SEQUENCE [LARGE SCALE GENOMIC DNA]</scope>
    <source>
        <strain>cv. Columbia</strain>
    </source>
</reference>
<reference key="2">
    <citation type="journal article" date="2017" name="Plant J.">
        <title>Araport11: a complete reannotation of the Arabidopsis thaliana reference genome.</title>
        <authorList>
            <person name="Cheng C.Y."/>
            <person name="Krishnakumar V."/>
            <person name="Chan A.P."/>
            <person name="Thibaud-Nissen F."/>
            <person name="Schobel S."/>
            <person name="Town C.D."/>
        </authorList>
    </citation>
    <scope>GENOME REANNOTATION</scope>
    <source>
        <strain>cv. Columbia</strain>
    </source>
</reference>
<reference key="3">
    <citation type="journal article" date="2000" name="Plant Mol. Biol.">
        <title>In Arabidopsis thaliana, 1% of the genome codes for a novel protein family unique to plants.</title>
        <authorList>
            <person name="Aubourg S."/>
            <person name="Boudet N."/>
            <person name="Kreis M."/>
            <person name="Lecharny A."/>
        </authorList>
    </citation>
    <scope>GENE FAMILY</scope>
</reference>
<reference key="4">
    <citation type="journal article" date="2004" name="Plant Cell">
        <title>Genome-wide analysis of Arabidopsis pentatricopeptide repeat proteins reveals their essential role in organelle biogenesis.</title>
        <authorList>
            <person name="Lurin C."/>
            <person name="Andres C."/>
            <person name="Aubourg S."/>
            <person name="Bellaoui M."/>
            <person name="Bitton F."/>
            <person name="Bruyere C."/>
            <person name="Caboche M."/>
            <person name="Debast C."/>
            <person name="Gualberto J."/>
            <person name="Hoffmann B."/>
            <person name="Lecharny A."/>
            <person name="Le Ret M."/>
            <person name="Martin-Magniette M.-L."/>
            <person name="Mireau H."/>
            <person name="Peeters N."/>
            <person name="Renou J.-P."/>
            <person name="Szurek B."/>
            <person name="Taconnat L."/>
            <person name="Small I."/>
        </authorList>
    </citation>
    <scope>GENE FAMILY</scope>
</reference>
<gene>
    <name type="primary">PCMP-E1</name>
    <name type="ordered locus">At4g19191</name>
    <name type="ORF">T18B16.160</name>
</gene>
<evidence type="ECO:0000255" key="1"/>
<evidence type="ECO:0000305" key="2"/>
<sequence>MSLIHRRLYRISGLSSVNAWNLQIREAVNRNDPVESLLLFREMKRGGFEPNNFTFPFVAKACARLADVGCCEMVHAHLIKSPFWSDVFVGTATVDMFVKCNSVDYAAKVFERMPERDATTWNAMLSGFCQSGHTDKAFSLFREMRLNEITPDSVTVMTLIQSASFEKSLKLLEAMHAVGIRLGVDVQVTVANTWISTYGKCGDLDSAKLVFEAIDRGDRTVVSWNSMFKAYSVFGEAFDAFGLYCLMLREEFKPDLSTFINLAASCQNPETLTQGRLIHSHAIHLGTDQDIEAINTFISMYSKSEDTCSARLLFDIMTSRTCVSWTVMISGYAEKGDMDEALALFHAMIKSGEKPDLVTLLSLISGCGKFGSLETGKWIDARADIYGCKRDNVMICNALIDMYSKCGSIHEARDIFDNTPEKTVVTWTTMIAGYALNGIFLEALKLFSKMIDLDYKPNHITFLAVLQACAHSGSLEKGWEYFHIMKQVYNISPGLDHYSCMVDLLGRKGKLEEALELIRNMSAKPDAGIWGALLNACKIHRNVKIAEQAAESLFNLEPQMAAPYVEMANIYAAAGMWDGFARIRSIMKQRNIKKYPGESVIQVNGKNHSFTVGEHGHVENEVIYFTLNGLSLFAKDKHVLYKDVYKEQSYELFI</sequence>
<dbReference type="EMBL" id="AL021687">
    <property type="protein sequence ID" value="CAA16708.1"/>
    <property type="status" value="ALT_SEQ"/>
    <property type="molecule type" value="Genomic_DNA"/>
</dbReference>
<dbReference type="EMBL" id="AL161550">
    <property type="protein sequence ID" value="CAB78921.1"/>
    <property type="status" value="ALT_SEQ"/>
    <property type="molecule type" value="Genomic_DNA"/>
</dbReference>
<dbReference type="EMBL" id="CP002687">
    <property type="protein sequence ID" value="AEE84158.1"/>
    <property type="molecule type" value="Genomic_DNA"/>
</dbReference>
<dbReference type="PIR" id="T04440">
    <property type="entry name" value="T04440"/>
</dbReference>
<dbReference type="RefSeq" id="NP_001119013.1">
    <property type="nucleotide sequence ID" value="NM_001125541.1"/>
</dbReference>
<dbReference type="SMR" id="P0C8Q2"/>
<dbReference type="FunCoup" id="P0C8Q2">
    <property type="interactions" value="1"/>
</dbReference>
<dbReference type="STRING" id="3702.P0C8Q2"/>
<dbReference type="PaxDb" id="3702-AT4G19191.1"/>
<dbReference type="EnsemblPlants" id="AT4G19191.1">
    <property type="protein sequence ID" value="AT4G19191.1"/>
    <property type="gene ID" value="AT4G19191"/>
</dbReference>
<dbReference type="GeneID" id="6240220"/>
<dbReference type="Gramene" id="AT4G19191.1">
    <property type="protein sequence ID" value="AT4G19191.1"/>
    <property type="gene ID" value="AT4G19191"/>
</dbReference>
<dbReference type="KEGG" id="ath:AT4G19191"/>
<dbReference type="Araport" id="AT4G19191"/>
<dbReference type="TAIR" id="AT4G19191"/>
<dbReference type="eggNOG" id="KOG3794">
    <property type="taxonomic scope" value="Eukaryota"/>
</dbReference>
<dbReference type="eggNOG" id="KOG4197">
    <property type="taxonomic scope" value="Eukaryota"/>
</dbReference>
<dbReference type="HOGENOM" id="CLU_002706_15_10_1"/>
<dbReference type="InParanoid" id="P0C8Q2"/>
<dbReference type="OMA" id="LFDCMSD"/>
<dbReference type="PhylomeDB" id="P0C8Q2"/>
<dbReference type="PRO" id="PR:P0C8Q2"/>
<dbReference type="Proteomes" id="UP000006548">
    <property type="component" value="Chromosome 4"/>
</dbReference>
<dbReference type="ExpressionAtlas" id="P0C8Q2">
    <property type="expression patterns" value="baseline and differential"/>
</dbReference>
<dbReference type="GO" id="GO:0005739">
    <property type="term" value="C:mitochondrion"/>
    <property type="evidence" value="ECO:0007669"/>
    <property type="project" value="UniProtKB-SubCell"/>
</dbReference>
<dbReference type="GO" id="GO:0003723">
    <property type="term" value="F:RNA binding"/>
    <property type="evidence" value="ECO:0007669"/>
    <property type="project" value="InterPro"/>
</dbReference>
<dbReference type="GO" id="GO:0009451">
    <property type="term" value="P:RNA modification"/>
    <property type="evidence" value="ECO:0007669"/>
    <property type="project" value="InterPro"/>
</dbReference>
<dbReference type="FunFam" id="1.25.40.10:FF:000396">
    <property type="entry name" value="Pentatricopeptide repeat-containing protein At2g36730"/>
    <property type="match status" value="1"/>
</dbReference>
<dbReference type="FunFam" id="1.25.40.10:FF:003180">
    <property type="entry name" value="Pentatricopeptide repeat-containing protein At4g19191, mitochondrial"/>
    <property type="match status" value="1"/>
</dbReference>
<dbReference type="FunFam" id="1.25.40.10:FF:000409">
    <property type="entry name" value="Pentatricopeptide repeat-containing protein, chloroplastic"/>
    <property type="match status" value="1"/>
</dbReference>
<dbReference type="FunFam" id="1.25.40.10:FF:000968">
    <property type="entry name" value="Pentatricopeptide repeat-containing protein, mitochondrial"/>
    <property type="match status" value="1"/>
</dbReference>
<dbReference type="Gene3D" id="1.25.40.10">
    <property type="entry name" value="Tetratricopeptide repeat domain"/>
    <property type="match status" value="4"/>
</dbReference>
<dbReference type="InterPro" id="IPR046848">
    <property type="entry name" value="E_motif"/>
</dbReference>
<dbReference type="InterPro" id="IPR002885">
    <property type="entry name" value="Pentatricopeptide_rpt"/>
</dbReference>
<dbReference type="InterPro" id="IPR046960">
    <property type="entry name" value="PPR_At4g14850-like_plant"/>
</dbReference>
<dbReference type="InterPro" id="IPR011990">
    <property type="entry name" value="TPR-like_helical_dom_sf"/>
</dbReference>
<dbReference type="NCBIfam" id="TIGR00756">
    <property type="entry name" value="PPR"/>
    <property type="match status" value="6"/>
</dbReference>
<dbReference type="PANTHER" id="PTHR47926">
    <property type="entry name" value="PENTATRICOPEPTIDE REPEAT-CONTAINING PROTEIN"/>
    <property type="match status" value="1"/>
</dbReference>
<dbReference type="PANTHER" id="PTHR47926:SF395">
    <property type="entry name" value="TETRATRICOPEPTIDE-LIKE HELICAL DOMAIN, DYW DOMAIN PROTEIN-RELATED"/>
    <property type="match status" value="1"/>
</dbReference>
<dbReference type="Pfam" id="PF20431">
    <property type="entry name" value="E_motif"/>
    <property type="match status" value="1"/>
</dbReference>
<dbReference type="Pfam" id="PF01535">
    <property type="entry name" value="PPR"/>
    <property type="match status" value="4"/>
</dbReference>
<dbReference type="Pfam" id="PF13041">
    <property type="entry name" value="PPR_2"/>
    <property type="match status" value="3"/>
</dbReference>
<dbReference type="SUPFAM" id="SSF81901">
    <property type="entry name" value="HCP-like"/>
    <property type="match status" value="1"/>
</dbReference>
<dbReference type="PROSITE" id="PS51375">
    <property type="entry name" value="PPR"/>
    <property type="match status" value="13"/>
</dbReference>
<comment type="subcellular location">
    <subcellularLocation>
        <location evidence="2">Mitochondrion</location>
    </subcellularLocation>
</comment>
<comment type="similarity">
    <text evidence="2">Belongs to the PPR family. PCMP-E subfamily.</text>
</comment>
<comment type="sequence caution" evidence="2">
    <conflict type="erroneous gene model prediction">
        <sequence resource="EMBL-CDS" id="CAA16708"/>
    </conflict>
    <text>The predicted gene has been split into 2 genes: At4g19190 and At4g19191.</text>
</comment>
<comment type="sequence caution" evidence="2">
    <conflict type="erroneous gene model prediction">
        <sequence resource="EMBL-CDS" id="CAB78921"/>
    </conflict>
    <text>The predicted gene has been split into 2 genes: At4g19190 and At4g19191.</text>
</comment>
<comment type="online information" name="Pentatricopeptide repeat proteins">
    <link uri="https://ppr.plantenergy.uwa.edu.au"/>
</comment>
<feature type="transit peptide" description="Mitochondrion" evidence="1">
    <location>
        <begin position="1"/>
        <end position="65"/>
    </location>
</feature>
<feature type="chain" id="PRO_0000363440" description="Pentatricopeptide repeat-containing protein At4g19191, mitochondrial">
    <location>
        <begin position="66"/>
        <end position="654"/>
    </location>
</feature>
<feature type="repeat" description="PPR 1">
    <location>
        <begin position="86"/>
        <end position="116"/>
    </location>
</feature>
<feature type="repeat" description="PPR 2">
    <location>
        <begin position="117"/>
        <end position="151"/>
    </location>
</feature>
<feature type="repeat" description="PPR 3">
    <location>
        <begin position="152"/>
        <end position="186"/>
    </location>
</feature>
<feature type="repeat" description="PPR 4">
    <location>
        <begin position="187"/>
        <end position="217"/>
    </location>
</feature>
<feature type="repeat" description="PPR 5">
    <location>
        <begin position="220"/>
        <end position="254"/>
    </location>
</feature>
<feature type="repeat" description="PPR 6">
    <location>
        <begin position="255"/>
        <end position="289"/>
    </location>
</feature>
<feature type="repeat" description="PPR 7">
    <location>
        <begin position="290"/>
        <end position="320"/>
    </location>
</feature>
<feature type="repeat" description="PPR 8">
    <location>
        <begin position="321"/>
        <end position="355"/>
    </location>
</feature>
<feature type="repeat" description="PPR 9">
    <location>
        <begin position="356"/>
        <end position="390"/>
    </location>
</feature>
<feature type="repeat" description="PPR 10">
    <location>
        <begin position="392"/>
        <end position="422"/>
    </location>
</feature>
<feature type="repeat" description="PPR 11">
    <location>
        <begin position="423"/>
        <end position="457"/>
    </location>
</feature>
<feature type="repeat" description="PPR 12">
    <location>
        <begin position="458"/>
        <end position="488"/>
    </location>
</feature>
<feature type="repeat" description="PPR 13">
    <location>
        <begin position="494"/>
        <end position="524"/>
    </location>
</feature>
<feature type="region of interest" description="Type E motif">
    <location>
        <begin position="529"/>
        <end position="604"/>
    </location>
</feature>
<feature type="region of interest" description="Type E(+) motif">
    <location>
        <begin position="605"/>
        <end position="635"/>
    </location>
</feature>
<protein>
    <recommendedName>
        <fullName>Pentatricopeptide repeat-containing protein At4g19191, mitochondrial</fullName>
    </recommendedName>
</protein>
<name>PP323_ARATH</name>
<accession>P0C8Q2</accession>
<accession>O49677</accession>
<organism>
    <name type="scientific">Arabidopsis thaliana</name>
    <name type="common">Mouse-ear cress</name>
    <dbReference type="NCBI Taxonomy" id="3702"/>
    <lineage>
        <taxon>Eukaryota</taxon>
        <taxon>Viridiplantae</taxon>
        <taxon>Streptophyta</taxon>
        <taxon>Embryophyta</taxon>
        <taxon>Tracheophyta</taxon>
        <taxon>Spermatophyta</taxon>
        <taxon>Magnoliopsida</taxon>
        <taxon>eudicotyledons</taxon>
        <taxon>Gunneridae</taxon>
        <taxon>Pentapetalae</taxon>
        <taxon>rosids</taxon>
        <taxon>malvids</taxon>
        <taxon>Brassicales</taxon>
        <taxon>Brassicaceae</taxon>
        <taxon>Camelineae</taxon>
        <taxon>Arabidopsis</taxon>
    </lineage>
</organism>
<proteinExistence type="evidence at transcript level"/>